<reference key="1">
    <citation type="journal article" date="1996" name="DNA Res.">
        <title>Sequence analysis of the genome of the unicellular cyanobacterium Synechocystis sp. strain PCC6803. II. Sequence determination of the entire genome and assignment of potential protein-coding regions.</title>
        <authorList>
            <person name="Kaneko T."/>
            <person name="Sato S."/>
            <person name="Kotani H."/>
            <person name="Tanaka A."/>
            <person name="Asamizu E."/>
            <person name="Nakamura Y."/>
            <person name="Miyajima N."/>
            <person name="Hirosawa M."/>
            <person name="Sugiura M."/>
            <person name="Sasamoto S."/>
            <person name="Kimura T."/>
            <person name="Hosouchi T."/>
            <person name="Matsuno A."/>
            <person name="Muraki A."/>
            <person name="Nakazaki N."/>
            <person name="Naruo K."/>
            <person name="Okumura S."/>
            <person name="Shimpo S."/>
            <person name="Takeuchi C."/>
            <person name="Wada T."/>
            <person name="Watanabe A."/>
            <person name="Yamada M."/>
            <person name="Yasuda M."/>
            <person name="Tabata S."/>
        </authorList>
    </citation>
    <scope>NUCLEOTIDE SEQUENCE [LARGE SCALE GENOMIC DNA]</scope>
    <source>
        <strain>ATCC 27184 / PCC 6803 / Kazusa</strain>
    </source>
</reference>
<reference key="2">
    <citation type="journal article" date="2012" name="J. Biol. Chem.">
        <title>Direct tests of enzymatic heme degradation by the malaria parasite Plasmodium falciparum.</title>
        <authorList>
            <person name="Sigala P.A."/>
            <person name="Crowley J.R."/>
            <person name="Hsieh S."/>
            <person name="Henderson J.P."/>
            <person name="Goldberg D.E."/>
        </authorList>
    </citation>
    <scope>CATALYTIC ACTIVITY</scope>
</reference>
<reference key="3">
    <citation type="journal article" date="2004" name="Eur. J. Biochem.">
        <title>Crystal structure of heme oxygenase-1 from cyanobacterium Synechocystis sp. PCC 6803 in complex with heme.</title>
        <authorList>
            <person name="Sugishima M."/>
            <person name="Migita C.T."/>
            <person name="Zhang X."/>
            <person name="Yoshida T."/>
            <person name="Fukuyama K."/>
        </authorList>
    </citation>
    <scope>X-RAY CRYSTALLOGRAPHY (2.5 ANGSTROMS) IN COMPLEX WITH HEME</scope>
    <scope>IRON-BINDING SITE</scope>
</reference>
<protein>
    <recommendedName>
        <fullName>Heme oxygenase 1</fullName>
        <shortName evidence="3">SynHO1</shortName>
        <ecNumber evidence="5">1.14.14.18</ecNumber>
    </recommendedName>
</protein>
<evidence type="ECO:0000250" key="1"/>
<evidence type="ECO:0000269" key="2">
    <source>
    </source>
</evidence>
<evidence type="ECO:0000303" key="3">
    <source>
    </source>
</evidence>
<evidence type="ECO:0000305" key="4"/>
<evidence type="ECO:0000305" key="5">
    <source>
    </source>
</evidence>
<evidence type="ECO:0007744" key="6">
    <source>
        <dbReference type="PDB" id="1WE1"/>
    </source>
</evidence>
<evidence type="ECO:0007829" key="7">
    <source>
        <dbReference type="PDB" id="1WE1"/>
    </source>
</evidence>
<gene>
    <name type="primary">pbsA1</name>
    <name type="ordered locus">sll1184</name>
</gene>
<name>HO1_SYNY3</name>
<proteinExistence type="evidence at protein level"/>
<organism>
    <name type="scientific">Synechocystis sp. (strain ATCC 27184 / PCC 6803 / Kazusa)</name>
    <dbReference type="NCBI Taxonomy" id="1111708"/>
    <lineage>
        <taxon>Bacteria</taxon>
        <taxon>Bacillati</taxon>
        <taxon>Cyanobacteriota</taxon>
        <taxon>Cyanophyceae</taxon>
        <taxon>Synechococcales</taxon>
        <taxon>Merismopediaceae</taxon>
        <taxon>Synechocystis</taxon>
    </lineage>
</organism>
<comment type="function">
    <text evidence="1">Catalyzes the opening of the heme ring with the release of iron. Key enzyme in the synthesis of the chromophoric part of the photosynthetic antennae.</text>
</comment>
<comment type="catalytic activity">
    <reaction evidence="5">
        <text>heme b + 3 reduced [NADPH--hemoprotein reductase] + 3 O2 = biliverdin IXalpha + CO + Fe(2+) + 3 oxidized [NADPH--hemoprotein reductase] + 3 H2O + H(+)</text>
        <dbReference type="Rhea" id="RHEA:21764"/>
        <dbReference type="Rhea" id="RHEA-COMP:11964"/>
        <dbReference type="Rhea" id="RHEA-COMP:11965"/>
        <dbReference type="ChEBI" id="CHEBI:15377"/>
        <dbReference type="ChEBI" id="CHEBI:15378"/>
        <dbReference type="ChEBI" id="CHEBI:15379"/>
        <dbReference type="ChEBI" id="CHEBI:17245"/>
        <dbReference type="ChEBI" id="CHEBI:29033"/>
        <dbReference type="ChEBI" id="CHEBI:57618"/>
        <dbReference type="ChEBI" id="CHEBI:57991"/>
        <dbReference type="ChEBI" id="CHEBI:58210"/>
        <dbReference type="ChEBI" id="CHEBI:60344"/>
        <dbReference type="EC" id="1.14.14.18"/>
    </reaction>
</comment>
<comment type="similarity">
    <text evidence="4">Belongs to the heme oxygenase family.</text>
</comment>
<sequence length="240" mass="27051">MSVNLASQLREGTKKSHSMAENVGFVKCFLKGVVEKNSYRKLVGNLYFVYSAMEEEMAKFKDHPILSHIYFPELNRKQSLEQDLQFYYGSNWRQEVKISAAGQAYVDRVRQVAATAPELLVAHSYTRYLGDLSGGQILKKIAQNAMNLHDGGTAFYEFADIDDEKAFKNTYRQAMNDLPIDQATAERIVDEANDAFAMNMKMFNELEGNLIKAIGIMVFNSLTRRRSQGSTEVGLATSEG</sequence>
<dbReference type="EC" id="1.14.14.18" evidence="5"/>
<dbReference type="EMBL" id="BA000022">
    <property type="protein sequence ID" value="BAA16864.1"/>
    <property type="molecule type" value="Genomic_DNA"/>
</dbReference>
<dbReference type="PIR" id="S74713">
    <property type="entry name" value="S74713"/>
</dbReference>
<dbReference type="PDB" id="1WE1">
    <property type="method" value="X-ray"/>
    <property type="resolution" value="2.50 A"/>
    <property type="chains" value="A/B/C/D=1-240"/>
</dbReference>
<dbReference type="PDBsum" id="1WE1"/>
<dbReference type="SMR" id="P72849"/>
<dbReference type="IntAct" id="P72849">
    <property type="interactions" value="2"/>
</dbReference>
<dbReference type="STRING" id="1148.gene:10497722"/>
<dbReference type="PaxDb" id="1148-1651938"/>
<dbReference type="EnsemblBacteria" id="BAA16864">
    <property type="protein sequence ID" value="BAA16864"/>
    <property type="gene ID" value="BAA16864"/>
</dbReference>
<dbReference type="KEGG" id="syn:sll1184"/>
<dbReference type="eggNOG" id="COG5398">
    <property type="taxonomic scope" value="Bacteria"/>
</dbReference>
<dbReference type="InParanoid" id="P72849"/>
<dbReference type="PhylomeDB" id="P72849"/>
<dbReference type="BioCyc" id="MetaCyc:MONOMER-13860"/>
<dbReference type="BRENDA" id="1.14.14.18">
    <property type="organism ID" value="6192"/>
</dbReference>
<dbReference type="BRENDA" id="1.14.15.20">
    <property type="organism ID" value="382"/>
</dbReference>
<dbReference type="EvolutionaryTrace" id="P72849"/>
<dbReference type="Proteomes" id="UP000001425">
    <property type="component" value="Chromosome"/>
</dbReference>
<dbReference type="GO" id="GO:0020037">
    <property type="term" value="F:heme binding"/>
    <property type="evidence" value="ECO:0000318"/>
    <property type="project" value="GO_Central"/>
</dbReference>
<dbReference type="GO" id="GO:0004392">
    <property type="term" value="F:heme oxygenase (decyclizing) activity"/>
    <property type="evidence" value="ECO:0000318"/>
    <property type="project" value="GO_Central"/>
</dbReference>
<dbReference type="GO" id="GO:0046872">
    <property type="term" value="F:metal ion binding"/>
    <property type="evidence" value="ECO:0007669"/>
    <property type="project" value="UniProtKB-KW"/>
</dbReference>
<dbReference type="GO" id="GO:0042167">
    <property type="term" value="P:heme catabolic process"/>
    <property type="evidence" value="ECO:0000318"/>
    <property type="project" value="GO_Central"/>
</dbReference>
<dbReference type="GO" id="GO:0006788">
    <property type="term" value="P:heme oxidation"/>
    <property type="evidence" value="ECO:0000318"/>
    <property type="project" value="GO_Central"/>
</dbReference>
<dbReference type="GO" id="GO:0015979">
    <property type="term" value="P:photosynthesis"/>
    <property type="evidence" value="ECO:0007669"/>
    <property type="project" value="UniProtKB-KW"/>
</dbReference>
<dbReference type="GO" id="GO:0006979">
    <property type="term" value="P:response to oxidative stress"/>
    <property type="evidence" value="ECO:0000318"/>
    <property type="project" value="GO_Central"/>
</dbReference>
<dbReference type="CDD" id="cd19165">
    <property type="entry name" value="HemeO"/>
    <property type="match status" value="1"/>
</dbReference>
<dbReference type="FunFam" id="1.20.910.10:FF:000001">
    <property type="entry name" value="Heme oxygenase 1"/>
    <property type="match status" value="1"/>
</dbReference>
<dbReference type="Gene3D" id="1.20.910.10">
    <property type="entry name" value="Heme oxygenase-like"/>
    <property type="match status" value="1"/>
</dbReference>
<dbReference type="InterPro" id="IPR002051">
    <property type="entry name" value="Haem_Oase"/>
</dbReference>
<dbReference type="InterPro" id="IPR016053">
    <property type="entry name" value="Haem_Oase-like"/>
</dbReference>
<dbReference type="InterPro" id="IPR016084">
    <property type="entry name" value="Haem_Oase-like_multi-hlx"/>
</dbReference>
<dbReference type="InterPro" id="IPR018207">
    <property type="entry name" value="Haem_oxygenase_CS"/>
</dbReference>
<dbReference type="PANTHER" id="PTHR10720">
    <property type="entry name" value="HEME OXYGENASE"/>
    <property type="match status" value="1"/>
</dbReference>
<dbReference type="PANTHER" id="PTHR10720:SF0">
    <property type="entry name" value="HEME OXYGENASE"/>
    <property type="match status" value="1"/>
</dbReference>
<dbReference type="Pfam" id="PF01126">
    <property type="entry name" value="Heme_oxygenase"/>
    <property type="match status" value="1"/>
</dbReference>
<dbReference type="PIRSF" id="PIRSF000343">
    <property type="entry name" value="Haem_Oase"/>
    <property type="match status" value="1"/>
</dbReference>
<dbReference type="PRINTS" id="PR00088">
    <property type="entry name" value="HAEMOXYGNASE"/>
</dbReference>
<dbReference type="SUPFAM" id="SSF48613">
    <property type="entry name" value="Heme oxygenase-like"/>
    <property type="match status" value="1"/>
</dbReference>
<dbReference type="PROSITE" id="PS00593">
    <property type="entry name" value="HEME_OXYGENASE"/>
    <property type="match status" value="1"/>
</dbReference>
<feature type="chain" id="PRO_0000209701" description="Heme oxygenase 1">
    <location>
        <begin position="1"/>
        <end position="240"/>
    </location>
</feature>
<feature type="binding site" evidence="2 6">
    <location>
        <position position="10"/>
    </location>
    <ligand>
        <name>heme b</name>
        <dbReference type="ChEBI" id="CHEBI:60344"/>
    </ligand>
</feature>
<feature type="binding site" description="axial binding residue" evidence="2 6">
    <location>
        <position position="17"/>
    </location>
    <ligand>
        <name>heme b</name>
        <dbReference type="ChEBI" id="CHEBI:60344"/>
    </ligand>
    <ligandPart>
        <name>Fe</name>
        <dbReference type="ChEBI" id="CHEBI:18248"/>
    </ligandPart>
</feature>
<feature type="binding site" evidence="2 6">
    <location>
        <position position="125"/>
    </location>
    <ligand>
        <name>heme b</name>
        <dbReference type="ChEBI" id="CHEBI:60344"/>
    </ligand>
</feature>
<feature type="binding site" evidence="2 6">
    <location>
        <position position="168"/>
    </location>
    <ligand>
        <name>heme b</name>
        <dbReference type="ChEBI" id="CHEBI:60344"/>
    </ligand>
</feature>
<feature type="binding site" evidence="2 6">
    <location>
        <position position="172"/>
    </location>
    <ligand>
        <name>heme b</name>
        <dbReference type="ChEBI" id="CHEBI:60344"/>
    </ligand>
</feature>
<feature type="helix" evidence="7">
    <location>
        <begin position="5"/>
        <end position="12"/>
    </location>
</feature>
<feature type="helix" evidence="7">
    <location>
        <begin position="14"/>
        <end position="21"/>
    </location>
</feature>
<feature type="helix" evidence="7">
    <location>
        <begin position="24"/>
        <end position="30"/>
    </location>
</feature>
<feature type="helix" evidence="7">
    <location>
        <begin position="36"/>
        <end position="59"/>
    </location>
</feature>
<feature type="turn" evidence="7">
    <location>
        <begin position="60"/>
        <end position="62"/>
    </location>
</feature>
<feature type="helix" evidence="7">
    <location>
        <begin position="66"/>
        <end position="69"/>
    </location>
</feature>
<feature type="helix" evidence="7">
    <location>
        <begin position="77"/>
        <end position="88"/>
    </location>
</feature>
<feature type="helix" evidence="7">
    <location>
        <begin position="92"/>
        <end position="95"/>
    </location>
</feature>
<feature type="helix" evidence="7">
    <location>
        <begin position="100"/>
        <end position="115"/>
    </location>
</feature>
<feature type="helix" evidence="7">
    <location>
        <begin position="117"/>
        <end position="119"/>
    </location>
</feature>
<feature type="helix" evidence="7">
    <location>
        <begin position="120"/>
        <end position="146"/>
    </location>
</feature>
<feature type="strand" evidence="7">
    <location>
        <begin position="149"/>
        <end position="152"/>
    </location>
</feature>
<feature type="helix" evidence="7">
    <location>
        <begin position="154"/>
        <end position="156"/>
    </location>
</feature>
<feature type="helix" evidence="7">
    <location>
        <begin position="164"/>
        <end position="176"/>
    </location>
</feature>
<feature type="helix" evidence="7">
    <location>
        <begin position="182"/>
        <end position="205"/>
    </location>
</feature>
<feature type="helix" evidence="7">
    <location>
        <begin position="207"/>
        <end position="222"/>
    </location>
</feature>
<keyword id="KW-0002">3D-structure</keyword>
<keyword id="KW-0349">Heme</keyword>
<keyword id="KW-0408">Iron</keyword>
<keyword id="KW-0479">Metal-binding</keyword>
<keyword id="KW-0560">Oxidoreductase</keyword>
<keyword id="KW-0602">Photosynthesis</keyword>
<keyword id="KW-1185">Reference proteome</keyword>
<accession>P72849</accession>